<feature type="chain" id="PRO_0000372982" description="Non-structural protein 1">
    <location>
        <begin position="1"/>
        <end position="237"/>
    </location>
</feature>
<feature type="region of interest" description="RNA-binding and homodimerization" evidence="1">
    <location>
        <begin position="1"/>
        <end position="73"/>
    </location>
</feature>
<feature type="region of interest" description="CPSF4-binding" evidence="1">
    <location>
        <begin position="180"/>
        <end position="215"/>
    </location>
</feature>
<feature type="region of interest" description="PABPN1-binding" evidence="1">
    <location>
        <begin position="223"/>
        <end position="230"/>
    </location>
</feature>
<feature type="short sequence motif" description="Nuclear localization signal" evidence="1">
    <location>
        <begin position="34"/>
        <end position="38"/>
    </location>
</feature>
<feature type="short sequence motif" description="Nuclear export signal" evidence="1">
    <location>
        <begin position="137"/>
        <end position="146"/>
    </location>
</feature>
<evidence type="ECO:0000255" key="1">
    <source>
        <dbReference type="HAMAP-Rule" id="MF_04066"/>
    </source>
</evidence>
<keyword id="KW-0025">Alternative splicing</keyword>
<keyword id="KW-1262">Eukaryotic host gene expression shutoff by virus</keyword>
<keyword id="KW-1035">Host cytoplasm</keyword>
<keyword id="KW-1190">Host gene expression shutoff by virus</keyword>
<keyword id="KW-1192">Host mRNA suppression by virus</keyword>
<keyword id="KW-1048">Host nucleus</keyword>
<keyword id="KW-0945">Host-virus interaction</keyword>
<keyword id="KW-1090">Inhibition of host innate immune response by virus</keyword>
<keyword id="KW-1114">Inhibition of host interferon signaling pathway by virus</keyword>
<keyword id="KW-1102">Inhibition of host PKR by virus</keyword>
<keyword id="KW-1103">Inhibition of host pre-mRNA processing by virus</keyword>
<keyword id="KW-1088">Inhibition of host RIG-I by virus</keyword>
<keyword id="KW-1113">Inhibition of host RLR pathway by virus</keyword>
<keyword id="KW-0922">Interferon antiviral system evasion</keyword>
<keyword id="KW-0694">RNA-binding</keyword>
<keyword id="KW-0832">Ubl conjugation</keyword>
<keyword id="KW-0899">Viral immunoevasion</keyword>
<protein>
    <recommendedName>
        <fullName evidence="1">Non-structural protein 1</fullName>
        <shortName evidence="1">NS1</shortName>
    </recommendedName>
    <alternativeName>
        <fullName evidence="1">NS1A</fullName>
    </alternativeName>
</protein>
<organism>
    <name type="scientific">Influenza A virus (strain A/Hickox/1940 H1N1)</name>
    <dbReference type="NCBI Taxonomy" id="383543"/>
    <lineage>
        <taxon>Viruses</taxon>
        <taxon>Riboviria</taxon>
        <taxon>Orthornavirae</taxon>
        <taxon>Negarnaviricota</taxon>
        <taxon>Polyploviricotina</taxon>
        <taxon>Insthoviricetes</taxon>
        <taxon>Articulavirales</taxon>
        <taxon>Orthomyxoviridae</taxon>
        <taxon>Alphainfluenzavirus</taxon>
        <taxon>Alphainfluenzavirus influenzae</taxon>
        <taxon>Influenza A virus</taxon>
    </lineage>
</organism>
<accession>Q0HD54</accession>
<proteinExistence type="inferred from homology"/>
<reference key="1">
    <citation type="submission" date="2006-08" db="EMBL/GenBank/DDBJ databases">
        <title>The NIAID influenza genome sequencing project.</title>
        <authorList>
            <person name="Spiro D."/>
            <person name="Ghedin E."/>
            <person name="Sengamalay N."/>
            <person name="Halpin R."/>
            <person name="Boyne A."/>
            <person name="Zaborsky J."/>
            <person name="Feldblyum T."/>
            <person name="Subbu V."/>
            <person name="Sparenborg J."/>
            <person name="Shumway M."/>
            <person name="Sitz J."/>
            <person name="Katzel D."/>
            <person name="Koo H."/>
            <person name="Salzberg S.L."/>
            <person name="Griesemer S."/>
            <person name="St George K."/>
            <person name="Bennett R."/>
            <person name="Taylor J."/>
            <person name="Bennink J.R."/>
            <person name="Yewdell J.W."/>
            <person name="Bao Y."/>
            <person name="Bolotov P."/>
            <person name="Dernovoy D."/>
            <person name="Kiryutin B."/>
            <person name="Lipman D.J."/>
            <person name="Tatusova T."/>
        </authorList>
    </citation>
    <scope>NUCLEOTIDE SEQUENCE [GENOMIC RNA]</scope>
</reference>
<reference key="2">
    <citation type="submission" date="2006-09" db="EMBL/GenBank/DDBJ databases">
        <authorList>
            <consortium name="The NIAID Influenza Genome Sequencing Consortium"/>
        </authorList>
    </citation>
    <scope>NUCLEOTIDE SEQUENCE [GENOMIC RNA]</scope>
</reference>
<name>NS1_I40A0</name>
<organismHost>
    <name type="scientific">Aves</name>
    <dbReference type="NCBI Taxonomy" id="8782"/>
</organismHost>
<organismHost>
    <name type="scientific">Homo sapiens</name>
    <name type="common">Human</name>
    <dbReference type="NCBI Taxonomy" id="9606"/>
</organismHost>
<organismHost>
    <name type="scientific">Sus scrofa</name>
    <name type="common">Pig</name>
    <dbReference type="NCBI Taxonomy" id="9823"/>
</organismHost>
<gene>
    <name evidence="1" type="primary">NS</name>
</gene>
<sequence>MDPNTVSSFQVDCFLWHVRKRVADQELGDAPFLDRLRRDQKSLKGRGSTLGLNIETATRVGKQIVERILKEESDEALKMTMASAPASRYLTDMTIEEMSRDWFMLMPKQKVAGPLCIRMDQAVMDKSIILKANFSVIFDRLETLILLRAFTEEGAIVGEISPLPSLPGHTNEDVKNAIGVLIGGLEWNDNTVRVSKTLQRFAWRSSNENGGPPLTPKQKRKMARTIRSEVRRNKMVD</sequence>
<dbReference type="EMBL" id="CY013275">
    <property type="protein sequence ID" value="ABI20831.1"/>
    <property type="molecule type" value="Other_RNA"/>
</dbReference>
<dbReference type="SMR" id="Q0HD54"/>
<dbReference type="IntAct" id="Q0HD54">
    <property type="interactions" value="70"/>
</dbReference>
<dbReference type="Proteomes" id="UP000156248">
    <property type="component" value="Genome"/>
</dbReference>
<dbReference type="GO" id="GO:0030430">
    <property type="term" value="C:host cell cytoplasm"/>
    <property type="evidence" value="ECO:0007669"/>
    <property type="project" value="UniProtKB-SubCell"/>
</dbReference>
<dbReference type="GO" id="GO:0042025">
    <property type="term" value="C:host cell nucleus"/>
    <property type="evidence" value="ECO:0007669"/>
    <property type="project" value="UniProtKB-SubCell"/>
</dbReference>
<dbReference type="GO" id="GO:0030291">
    <property type="term" value="F:protein serine/threonine kinase inhibitor activity"/>
    <property type="evidence" value="ECO:0007669"/>
    <property type="project" value="UniProtKB-KW"/>
</dbReference>
<dbReference type="GO" id="GO:0003723">
    <property type="term" value="F:RNA binding"/>
    <property type="evidence" value="ECO:0007669"/>
    <property type="project" value="UniProtKB-KW"/>
</dbReference>
<dbReference type="GO" id="GO:0039540">
    <property type="term" value="P:symbiont-mediated suppression of host cytoplasmic pattern recognition receptor signaling pathway via inhibition of RIG-I activity"/>
    <property type="evidence" value="ECO:0007669"/>
    <property type="project" value="UniProtKB-KW"/>
</dbReference>
<dbReference type="GO" id="GO:0039657">
    <property type="term" value="P:symbiont-mediated suppression of host gene expression"/>
    <property type="evidence" value="ECO:0007669"/>
    <property type="project" value="UniProtKB-KW"/>
</dbReference>
<dbReference type="GO" id="GO:0039524">
    <property type="term" value="P:symbiont-mediated suppression of host mRNA processing"/>
    <property type="evidence" value="ECO:0007669"/>
    <property type="project" value="UniProtKB-KW"/>
</dbReference>
<dbReference type="GO" id="GO:0039580">
    <property type="term" value="P:symbiont-mediated suppression of host PKR/eIFalpha signaling"/>
    <property type="evidence" value="ECO:0007669"/>
    <property type="project" value="UniProtKB-KW"/>
</dbReference>
<dbReference type="GO" id="GO:0039502">
    <property type="term" value="P:symbiont-mediated suppression of host type I interferon-mediated signaling pathway"/>
    <property type="evidence" value="ECO:0007669"/>
    <property type="project" value="UniProtKB-KW"/>
</dbReference>
<dbReference type="FunFam" id="1.10.287.10:FF:000001">
    <property type="entry name" value="Non-structural protein 1"/>
    <property type="match status" value="1"/>
</dbReference>
<dbReference type="FunFam" id="3.30.420.330:FF:000001">
    <property type="entry name" value="Non-structural protein 1"/>
    <property type="match status" value="1"/>
</dbReference>
<dbReference type="Gene3D" id="3.30.420.330">
    <property type="entry name" value="Influenza virus non-structural protein, effector domain"/>
    <property type="match status" value="1"/>
</dbReference>
<dbReference type="Gene3D" id="1.10.287.10">
    <property type="entry name" value="S15/NS1, RNA-binding"/>
    <property type="match status" value="1"/>
</dbReference>
<dbReference type="HAMAP" id="MF_04066">
    <property type="entry name" value="INFV_NS1"/>
    <property type="match status" value="1"/>
</dbReference>
<dbReference type="InterPro" id="IPR004208">
    <property type="entry name" value="NS1"/>
</dbReference>
<dbReference type="InterPro" id="IPR000256">
    <property type="entry name" value="NS1A"/>
</dbReference>
<dbReference type="InterPro" id="IPR038064">
    <property type="entry name" value="NS1A_effect_dom-like_sf"/>
</dbReference>
<dbReference type="InterPro" id="IPR009068">
    <property type="entry name" value="uS15_NS1_RNA-bd_sf"/>
</dbReference>
<dbReference type="Pfam" id="PF00600">
    <property type="entry name" value="Flu_NS1"/>
    <property type="match status" value="1"/>
</dbReference>
<dbReference type="SUPFAM" id="SSF143021">
    <property type="entry name" value="Ns1 effector domain-like"/>
    <property type="match status" value="1"/>
</dbReference>
<dbReference type="SUPFAM" id="SSF47060">
    <property type="entry name" value="S15/NS1 RNA-binding domain"/>
    <property type="match status" value="1"/>
</dbReference>
<comment type="function">
    <text evidence="1">Inhibits post-transcriptional processing of cellular pre-mRNA, by binding and inhibiting two cellular proteins that are required for the 3'-end processing of cellular pre-mRNAs: the 30 kDa cleavage and polyadenylation specificity factor/CPSF4 and the poly(A)-binding protein 2/PABPN1. In turn, unprocessed 3' end pre-mRNAs accumulate in the host nucleus and are no longer exported to the cytoplasm. Cellular protein synthesis is thereby shut off very early after virus infection. Viral protein synthesis is not affected by the inhibition of the cellular 3' end processing machinery because the poly(A) tails of viral mRNAs are produced by the viral polymerase through a stuttering mechanism. Prevents the establishment of the cellular antiviral state by inhibiting TRIM25-mediated RIGI ubiquitination, which normally triggers the antiviral transduction signal that leads to the activation of type I IFN genes by transcription factors IRF3 and IRF7. Also binds poly(A) and U6 snRNA. Inhibits the integrated stress response (ISR) in the infected cell by blocking dsRNA binding by EIF2AK2/PKR and further phosphorylation of EIF2S1/EIF-2ALPHA. Stress granule formation is thus inhibited, which allows protein synthesis and viral replication.</text>
</comment>
<comment type="subunit">
    <text evidence="1">Homodimer. Interacts with host TRIM25 (via coiled coil); this interaction specifically inhibits TRIM25 multimerization and TRIM25-mediated RIGI CARD ubiquitination. Interacts with human EIF2AK2/PKR, CPSF4, IVNS1ABP and PABPN1.</text>
</comment>
<comment type="subcellular location">
    <subcellularLocation>
        <location evidence="1">Host nucleus</location>
    </subcellularLocation>
    <subcellularLocation>
        <location evidence="1">Host cytoplasm</location>
    </subcellularLocation>
    <text evidence="1">In uninfected, transfected cells, NS1 is localized in the nucleus. Only in virus infected cells, the nuclear export signal is unveiled, presumably by a viral protein, and a fraction of NS1 is exported in the cytoplasm.</text>
</comment>
<comment type="alternative products">
    <event type="alternative splicing"/>
    <isoform>
        <id>Q0HD54-1</id>
        <name>NS1</name>
        <sequence type="displayed"/>
    </isoform>
    <isoform>
        <id>Q0HD55-1</id>
        <name>NEP</name>
        <name>NS2</name>
        <sequence type="external"/>
    </isoform>
</comment>
<comment type="domain">
    <text evidence="1">The dsRNA-binding region is required for suppression of RNA silencing.</text>
</comment>
<comment type="PTM">
    <text evidence="1">Upon interferon induction, ISGylated via host HERC5; this results in the impairment of NS1 interaction with RNA targets due to its inability to form homodimers and to interact with host EIF2AK2/PKR.</text>
</comment>
<comment type="similarity">
    <text evidence="1">Belongs to the influenza A viruses NS1 family.</text>
</comment>